<protein>
    <recommendedName>
        <fullName evidence="1">N-acetyl-gamma-glutamyl-phosphate reductase</fullName>
        <shortName evidence="1">AGPR</shortName>
        <ecNumber evidence="1">1.2.1.38</ecNumber>
    </recommendedName>
    <alternativeName>
        <fullName evidence="1">N-acetyl-glutamate semialdehyde dehydrogenase</fullName>
        <shortName evidence="1">NAGSA dehydrogenase</shortName>
    </alternativeName>
</protein>
<gene>
    <name evidence="1" type="primary">argC</name>
    <name type="ordered locus">SERP1092</name>
</gene>
<evidence type="ECO:0000255" key="1">
    <source>
        <dbReference type="HAMAP-Rule" id="MF_00150"/>
    </source>
</evidence>
<feature type="chain" id="PRO_0000112455" description="N-acetyl-gamma-glutamyl-phosphate reductase">
    <location>
        <begin position="1"/>
        <end position="341"/>
    </location>
</feature>
<feature type="active site" evidence="1">
    <location>
        <position position="147"/>
    </location>
</feature>
<keyword id="KW-0028">Amino-acid biosynthesis</keyword>
<keyword id="KW-0055">Arginine biosynthesis</keyword>
<keyword id="KW-0963">Cytoplasm</keyword>
<keyword id="KW-0521">NADP</keyword>
<keyword id="KW-0560">Oxidoreductase</keyword>
<keyword id="KW-1185">Reference proteome</keyword>
<accession>Q5HP21</accession>
<reference key="1">
    <citation type="journal article" date="2005" name="J. Bacteriol.">
        <title>Insights on evolution of virulence and resistance from the complete genome analysis of an early methicillin-resistant Staphylococcus aureus strain and a biofilm-producing methicillin-resistant Staphylococcus epidermidis strain.</title>
        <authorList>
            <person name="Gill S.R."/>
            <person name="Fouts D.E."/>
            <person name="Archer G.L."/>
            <person name="Mongodin E.F."/>
            <person name="DeBoy R.T."/>
            <person name="Ravel J."/>
            <person name="Paulsen I.T."/>
            <person name="Kolonay J.F."/>
            <person name="Brinkac L.M."/>
            <person name="Beanan M.J."/>
            <person name="Dodson R.J."/>
            <person name="Daugherty S.C."/>
            <person name="Madupu R."/>
            <person name="Angiuoli S.V."/>
            <person name="Durkin A.S."/>
            <person name="Haft D.H."/>
            <person name="Vamathevan J.J."/>
            <person name="Khouri H."/>
            <person name="Utterback T.R."/>
            <person name="Lee C."/>
            <person name="Dimitrov G."/>
            <person name="Jiang L."/>
            <person name="Qin H."/>
            <person name="Weidman J."/>
            <person name="Tran K."/>
            <person name="Kang K.H."/>
            <person name="Hance I.R."/>
            <person name="Nelson K.E."/>
            <person name="Fraser C.M."/>
        </authorList>
    </citation>
    <scope>NUCLEOTIDE SEQUENCE [LARGE SCALE GENOMIC DNA]</scope>
    <source>
        <strain>ATCC 35984 / DSM 28319 / BCRC 17069 / CCUG 31568 / BM 3577 / RP62A</strain>
    </source>
</reference>
<proteinExistence type="inferred from homology"/>
<comment type="function">
    <text evidence="1">Catalyzes the NADPH-dependent reduction of N-acetyl-5-glutamyl phosphate to yield N-acetyl-L-glutamate 5-semialdehyde.</text>
</comment>
<comment type="catalytic activity">
    <reaction evidence="1">
        <text>N-acetyl-L-glutamate 5-semialdehyde + phosphate + NADP(+) = N-acetyl-L-glutamyl 5-phosphate + NADPH + H(+)</text>
        <dbReference type="Rhea" id="RHEA:21588"/>
        <dbReference type="ChEBI" id="CHEBI:15378"/>
        <dbReference type="ChEBI" id="CHEBI:29123"/>
        <dbReference type="ChEBI" id="CHEBI:43474"/>
        <dbReference type="ChEBI" id="CHEBI:57783"/>
        <dbReference type="ChEBI" id="CHEBI:57936"/>
        <dbReference type="ChEBI" id="CHEBI:58349"/>
        <dbReference type="EC" id="1.2.1.38"/>
    </reaction>
</comment>
<comment type="pathway">
    <text evidence="1">Amino-acid biosynthesis; L-arginine biosynthesis; N(2)-acetyl-L-ornithine from L-glutamate: step 3/4.</text>
</comment>
<comment type="subcellular location">
    <subcellularLocation>
        <location evidence="1">Cytoplasm</location>
    </subcellularLocation>
</comment>
<comment type="similarity">
    <text evidence="1">Belongs to the NAGSA dehydrogenase family. Type 1 subfamily.</text>
</comment>
<dbReference type="EC" id="1.2.1.38" evidence="1"/>
<dbReference type="EMBL" id="CP000029">
    <property type="protein sequence ID" value="AAW54476.1"/>
    <property type="molecule type" value="Genomic_DNA"/>
</dbReference>
<dbReference type="RefSeq" id="WP_001830986.1">
    <property type="nucleotide sequence ID" value="NC_002976.3"/>
</dbReference>
<dbReference type="SMR" id="Q5HP21"/>
<dbReference type="STRING" id="176279.SERP1092"/>
<dbReference type="GeneID" id="50018670"/>
<dbReference type="KEGG" id="ser:SERP1092"/>
<dbReference type="eggNOG" id="COG0002">
    <property type="taxonomic scope" value="Bacteria"/>
</dbReference>
<dbReference type="HOGENOM" id="CLU_006384_0_1_9"/>
<dbReference type="UniPathway" id="UPA00068">
    <property type="reaction ID" value="UER00108"/>
</dbReference>
<dbReference type="Proteomes" id="UP000000531">
    <property type="component" value="Chromosome"/>
</dbReference>
<dbReference type="GO" id="GO:0005737">
    <property type="term" value="C:cytoplasm"/>
    <property type="evidence" value="ECO:0007669"/>
    <property type="project" value="UniProtKB-SubCell"/>
</dbReference>
<dbReference type="GO" id="GO:0003942">
    <property type="term" value="F:N-acetyl-gamma-glutamyl-phosphate reductase activity"/>
    <property type="evidence" value="ECO:0007669"/>
    <property type="project" value="UniProtKB-UniRule"/>
</dbReference>
<dbReference type="GO" id="GO:0051287">
    <property type="term" value="F:NAD binding"/>
    <property type="evidence" value="ECO:0007669"/>
    <property type="project" value="InterPro"/>
</dbReference>
<dbReference type="GO" id="GO:0070401">
    <property type="term" value="F:NADP+ binding"/>
    <property type="evidence" value="ECO:0007669"/>
    <property type="project" value="InterPro"/>
</dbReference>
<dbReference type="GO" id="GO:0006526">
    <property type="term" value="P:L-arginine biosynthetic process"/>
    <property type="evidence" value="ECO:0007669"/>
    <property type="project" value="UniProtKB-UniRule"/>
</dbReference>
<dbReference type="CDD" id="cd23934">
    <property type="entry name" value="AGPR_1_C"/>
    <property type="match status" value="1"/>
</dbReference>
<dbReference type="CDD" id="cd17895">
    <property type="entry name" value="AGPR_1_N"/>
    <property type="match status" value="1"/>
</dbReference>
<dbReference type="FunFam" id="3.30.360.10:FF:000014">
    <property type="entry name" value="N-acetyl-gamma-glutamyl-phosphate reductase"/>
    <property type="match status" value="1"/>
</dbReference>
<dbReference type="Gene3D" id="3.30.360.10">
    <property type="entry name" value="Dihydrodipicolinate Reductase, domain 2"/>
    <property type="match status" value="1"/>
</dbReference>
<dbReference type="Gene3D" id="3.40.50.720">
    <property type="entry name" value="NAD(P)-binding Rossmann-like Domain"/>
    <property type="match status" value="1"/>
</dbReference>
<dbReference type="HAMAP" id="MF_00150">
    <property type="entry name" value="ArgC_type1"/>
    <property type="match status" value="1"/>
</dbReference>
<dbReference type="InterPro" id="IPR023013">
    <property type="entry name" value="AGPR_AS"/>
</dbReference>
<dbReference type="InterPro" id="IPR000706">
    <property type="entry name" value="AGPR_type-1"/>
</dbReference>
<dbReference type="InterPro" id="IPR036291">
    <property type="entry name" value="NAD(P)-bd_dom_sf"/>
</dbReference>
<dbReference type="InterPro" id="IPR050085">
    <property type="entry name" value="NAGSA_dehydrogenase"/>
</dbReference>
<dbReference type="InterPro" id="IPR000534">
    <property type="entry name" value="Semialdehyde_DH_NAD-bd"/>
</dbReference>
<dbReference type="NCBIfam" id="TIGR01850">
    <property type="entry name" value="argC"/>
    <property type="match status" value="1"/>
</dbReference>
<dbReference type="PANTHER" id="PTHR32338:SF10">
    <property type="entry name" value="N-ACETYL-GAMMA-GLUTAMYL-PHOSPHATE REDUCTASE, CHLOROPLASTIC-RELATED"/>
    <property type="match status" value="1"/>
</dbReference>
<dbReference type="PANTHER" id="PTHR32338">
    <property type="entry name" value="N-ACETYL-GAMMA-GLUTAMYL-PHOSPHATE REDUCTASE, CHLOROPLASTIC-RELATED-RELATED"/>
    <property type="match status" value="1"/>
</dbReference>
<dbReference type="Pfam" id="PF01118">
    <property type="entry name" value="Semialdhyde_dh"/>
    <property type="match status" value="1"/>
</dbReference>
<dbReference type="Pfam" id="PF22698">
    <property type="entry name" value="Semialdhyde_dhC_1"/>
    <property type="match status" value="1"/>
</dbReference>
<dbReference type="SMART" id="SM00859">
    <property type="entry name" value="Semialdhyde_dh"/>
    <property type="match status" value="1"/>
</dbReference>
<dbReference type="SUPFAM" id="SSF55347">
    <property type="entry name" value="Glyceraldehyde-3-phosphate dehydrogenase-like, C-terminal domain"/>
    <property type="match status" value="1"/>
</dbReference>
<dbReference type="SUPFAM" id="SSF51735">
    <property type="entry name" value="NAD(P)-binding Rossmann-fold domains"/>
    <property type="match status" value="1"/>
</dbReference>
<dbReference type="PROSITE" id="PS01224">
    <property type="entry name" value="ARGC"/>
    <property type="match status" value="1"/>
</dbReference>
<organism>
    <name type="scientific">Staphylococcus epidermidis (strain ATCC 35984 / DSM 28319 / BCRC 17069 / CCUG 31568 / BM 3577 / RP62A)</name>
    <dbReference type="NCBI Taxonomy" id="176279"/>
    <lineage>
        <taxon>Bacteria</taxon>
        <taxon>Bacillati</taxon>
        <taxon>Bacillota</taxon>
        <taxon>Bacilli</taxon>
        <taxon>Bacillales</taxon>
        <taxon>Staphylococcaceae</taxon>
        <taxon>Staphylococcus</taxon>
    </lineage>
</organism>
<name>ARGC_STAEQ</name>
<sequence length="341" mass="38227">MHISIVGITGYTGLELLRLALNHPHVTVSSIHATKEVGVQISDIFPHLKGIFDKEIQVFDSEFIMTHSDLVFFATPSGVAKDLSKNFVKNNFPVIDLSGDHRLSPDVYLKWYKKSPCTVDIQKRFTYGLSEVMNISHRNRFIANPGCYATATELALYPIISNHLIRVDSIIVDAKSGLTGAGKKLNQSSHYVNVNNNYVTYKLNKHQHIPEIVQTLQFFNKSLQNIQFSTSLIPVNRGIVATIYTRLENGVKINQIESTYKDVYKNKPFIRIKDGLPQLNEVIGTNYTDIGFVYNETTGVLTISSVIDNLIKGAAGQAIQNMNLMFNFDETDGLILAPLYI</sequence>